<organism>
    <name type="scientific">Pelobacter propionicus (strain DSM 2379 / NBRC 103807 / OttBd1)</name>
    <dbReference type="NCBI Taxonomy" id="338966"/>
    <lineage>
        <taxon>Bacteria</taxon>
        <taxon>Pseudomonadati</taxon>
        <taxon>Thermodesulfobacteriota</taxon>
        <taxon>Desulfuromonadia</taxon>
        <taxon>Desulfuromonadales</taxon>
        <taxon>Desulfuromonadaceae</taxon>
        <taxon>Pelobacter</taxon>
    </lineage>
</organism>
<protein>
    <recommendedName>
        <fullName evidence="1">Proline--tRNA ligase</fullName>
        <ecNumber evidence="1">6.1.1.15</ecNumber>
    </recommendedName>
    <alternativeName>
        <fullName evidence="1">Prolyl-tRNA synthetase</fullName>
        <shortName evidence="1">ProRS</shortName>
    </alternativeName>
</protein>
<gene>
    <name evidence="1" type="primary">proS</name>
    <name type="ordered locus">Ppro_1753</name>
</gene>
<comment type="function">
    <text evidence="1">Catalyzes the attachment of proline to tRNA(Pro) in a two-step reaction: proline is first activated by ATP to form Pro-AMP and then transferred to the acceptor end of tRNA(Pro). As ProRS can inadvertently accommodate and process non-cognate amino acids such as alanine and cysteine, to avoid such errors it has two additional distinct editing activities against alanine. One activity is designated as 'pretransfer' editing and involves the tRNA(Pro)-independent hydrolysis of activated Ala-AMP. The other activity is designated 'posttransfer' editing and involves deacylation of mischarged Ala-tRNA(Pro). The misacylated Cys-tRNA(Pro) is not edited by ProRS.</text>
</comment>
<comment type="catalytic activity">
    <reaction evidence="1">
        <text>tRNA(Pro) + L-proline + ATP = L-prolyl-tRNA(Pro) + AMP + diphosphate</text>
        <dbReference type="Rhea" id="RHEA:14305"/>
        <dbReference type="Rhea" id="RHEA-COMP:9700"/>
        <dbReference type="Rhea" id="RHEA-COMP:9702"/>
        <dbReference type="ChEBI" id="CHEBI:30616"/>
        <dbReference type="ChEBI" id="CHEBI:33019"/>
        <dbReference type="ChEBI" id="CHEBI:60039"/>
        <dbReference type="ChEBI" id="CHEBI:78442"/>
        <dbReference type="ChEBI" id="CHEBI:78532"/>
        <dbReference type="ChEBI" id="CHEBI:456215"/>
        <dbReference type="EC" id="6.1.1.15"/>
    </reaction>
</comment>
<comment type="subunit">
    <text evidence="1">Homodimer.</text>
</comment>
<comment type="subcellular location">
    <subcellularLocation>
        <location evidence="1">Cytoplasm</location>
    </subcellularLocation>
</comment>
<comment type="domain">
    <text evidence="1">Consists of three domains: the N-terminal catalytic domain, the editing domain and the C-terminal anticodon-binding domain.</text>
</comment>
<comment type="similarity">
    <text evidence="1">Belongs to the class-II aminoacyl-tRNA synthetase family. ProS type 1 subfamily.</text>
</comment>
<keyword id="KW-0030">Aminoacyl-tRNA synthetase</keyword>
<keyword id="KW-0067">ATP-binding</keyword>
<keyword id="KW-0963">Cytoplasm</keyword>
<keyword id="KW-0436">Ligase</keyword>
<keyword id="KW-0547">Nucleotide-binding</keyword>
<keyword id="KW-0648">Protein biosynthesis</keyword>
<keyword id="KW-1185">Reference proteome</keyword>
<dbReference type="EC" id="6.1.1.15" evidence="1"/>
<dbReference type="EMBL" id="CP000482">
    <property type="protein sequence ID" value="ABK99365.1"/>
    <property type="molecule type" value="Genomic_DNA"/>
</dbReference>
<dbReference type="RefSeq" id="WP_011735642.1">
    <property type="nucleotide sequence ID" value="NC_008609.1"/>
</dbReference>
<dbReference type="SMR" id="A1APU5"/>
<dbReference type="STRING" id="338966.Ppro_1753"/>
<dbReference type="KEGG" id="ppd:Ppro_1753"/>
<dbReference type="eggNOG" id="COG0442">
    <property type="taxonomic scope" value="Bacteria"/>
</dbReference>
<dbReference type="HOGENOM" id="CLU_016739_0_0_7"/>
<dbReference type="OrthoDB" id="9809052at2"/>
<dbReference type="Proteomes" id="UP000006732">
    <property type="component" value="Chromosome"/>
</dbReference>
<dbReference type="GO" id="GO:0005829">
    <property type="term" value="C:cytosol"/>
    <property type="evidence" value="ECO:0007669"/>
    <property type="project" value="TreeGrafter"/>
</dbReference>
<dbReference type="GO" id="GO:0002161">
    <property type="term" value="F:aminoacyl-tRNA deacylase activity"/>
    <property type="evidence" value="ECO:0007669"/>
    <property type="project" value="InterPro"/>
</dbReference>
<dbReference type="GO" id="GO:0005524">
    <property type="term" value="F:ATP binding"/>
    <property type="evidence" value="ECO:0007669"/>
    <property type="project" value="UniProtKB-UniRule"/>
</dbReference>
<dbReference type="GO" id="GO:0004827">
    <property type="term" value="F:proline-tRNA ligase activity"/>
    <property type="evidence" value="ECO:0007669"/>
    <property type="project" value="UniProtKB-UniRule"/>
</dbReference>
<dbReference type="GO" id="GO:0006433">
    <property type="term" value="P:prolyl-tRNA aminoacylation"/>
    <property type="evidence" value="ECO:0007669"/>
    <property type="project" value="UniProtKB-UniRule"/>
</dbReference>
<dbReference type="CDD" id="cd04334">
    <property type="entry name" value="ProRS-INS"/>
    <property type="match status" value="1"/>
</dbReference>
<dbReference type="CDD" id="cd00861">
    <property type="entry name" value="ProRS_anticodon_short"/>
    <property type="match status" value="1"/>
</dbReference>
<dbReference type="CDD" id="cd00779">
    <property type="entry name" value="ProRS_core_prok"/>
    <property type="match status" value="1"/>
</dbReference>
<dbReference type="FunFam" id="3.30.930.10:FF:000043">
    <property type="entry name" value="Proline--tRNA ligase"/>
    <property type="match status" value="1"/>
</dbReference>
<dbReference type="FunFam" id="3.30.930.10:FF:000062">
    <property type="entry name" value="Proline--tRNA ligase"/>
    <property type="match status" value="1"/>
</dbReference>
<dbReference type="FunFam" id="3.40.50.800:FF:000011">
    <property type="entry name" value="Proline--tRNA ligase"/>
    <property type="match status" value="1"/>
</dbReference>
<dbReference type="Gene3D" id="3.40.50.800">
    <property type="entry name" value="Anticodon-binding domain"/>
    <property type="match status" value="1"/>
</dbReference>
<dbReference type="Gene3D" id="3.30.930.10">
    <property type="entry name" value="Bira Bifunctional Protein, Domain 2"/>
    <property type="match status" value="2"/>
</dbReference>
<dbReference type="HAMAP" id="MF_01569">
    <property type="entry name" value="Pro_tRNA_synth_type1"/>
    <property type="match status" value="1"/>
</dbReference>
<dbReference type="InterPro" id="IPR002314">
    <property type="entry name" value="aa-tRNA-synt_IIb"/>
</dbReference>
<dbReference type="InterPro" id="IPR006195">
    <property type="entry name" value="aa-tRNA-synth_II"/>
</dbReference>
<dbReference type="InterPro" id="IPR045864">
    <property type="entry name" value="aa-tRNA-synth_II/BPL/LPL"/>
</dbReference>
<dbReference type="InterPro" id="IPR004154">
    <property type="entry name" value="Anticodon-bd"/>
</dbReference>
<dbReference type="InterPro" id="IPR036621">
    <property type="entry name" value="Anticodon-bd_dom_sf"/>
</dbReference>
<dbReference type="InterPro" id="IPR002316">
    <property type="entry name" value="Pro-tRNA-ligase_IIa"/>
</dbReference>
<dbReference type="InterPro" id="IPR004500">
    <property type="entry name" value="Pro-tRNA-synth_IIa_bac-type"/>
</dbReference>
<dbReference type="InterPro" id="IPR023717">
    <property type="entry name" value="Pro-tRNA-Synthase_IIa_type1"/>
</dbReference>
<dbReference type="InterPro" id="IPR050062">
    <property type="entry name" value="Pro-tRNA_synthetase"/>
</dbReference>
<dbReference type="InterPro" id="IPR044140">
    <property type="entry name" value="ProRS_anticodon_short"/>
</dbReference>
<dbReference type="InterPro" id="IPR033730">
    <property type="entry name" value="ProRS_core_prok"/>
</dbReference>
<dbReference type="InterPro" id="IPR036754">
    <property type="entry name" value="YbaK/aa-tRNA-synt-asso_dom_sf"/>
</dbReference>
<dbReference type="InterPro" id="IPR007214">
    <property type="entry name" value="YbaK/aa-tRNA-synth-assoc-dom"/>
</dbReference>
<dbReference type="NCBIfam" id="NF006625">
    <property type="entry name" value="PRK09194.1"/>
    <property type="match status" value="1"/>
</dbReference>
<dbReference type="NCBIfam" id="TIGR00409">
    <property type="entry name" value="proS_fam_II"/>
    <property type="match status" value="1"/>
</dbReference>
<dbReference type="PANTHER" id="PTHR42753">
    <property type="entry name" value="MITOCHONDRIAL RIBOSOME PROTEIN L39/PROLYL-TRNA LIGASE FAMILY MEMBER"/>
    <property type="match status" value="1"/>
</dbReference>
<dbReference type="PANTHER" id="PTHR42753:SF2">
    <property type="entry name" value="PROLINE--TRNA LIGASE"/>
    <property type="match status" value="1"/>
</dbReference>
<dbReference type="Pfam" id="PF03129">
    <property type="entry name" value="HGTP_anticodon"/>
    <property type="match status" value="1"/>
</dbReference>
<dbReference type="Pfam" id="PF00587">
    <property type="entry name" value="tRNA-synt_2b"/>
    <property type="match status" value="1"/>
</dbReference>
<dbReference type="Pfam" id="PF04073">
    <property type="entry name" value="tRNA_edit"/>
    <property type="match status" value="1"/>
</dbReference>
<dbReference type="PIRSF" id="PIRSF001535">
    <property type="entry name" value="ProRS_1"/>
    <property type="match status" value="1"/>
</dbReference>
<dbReference type="PRINTS" id="PR01046">
    <property type="entry name" value="TRNASYNTHPRO"/>
</dbReference>
<dbReference type="SUPFAM" id="SSF52954">
    <property type="entry name" value="Class II aaRS ABD-related"/>
    <property type="match status" value="1"/>
</dbReference>
<dbReference type="SUPFAM" id="SSF55681">
    <property type="entry name" value="Class II aaRS and biotin synthetases"/>
    <property type="match status" value="1"/>
</dbReference>
<dbReference type="SUPFAM" id="SSF55826">
    <property type="entry name" value="YbaK/ProRS associated domain"/>
    <property type="match status" value="1"/>
</dbReference>
<dbReference type="PROSITE" id="PS50862">
    <property type="entry name" value="AA_TRNA_LIGASE_II"/>
    <property type="match status" value="1"/>
</dbReference>
<evidence type="ECO:0000255" key="1">
    <source>
        <dbReference type="HAMAP-Rule" id="MF_01569"/>
    </source>
</evidence>
<sequence length="576" mass="64031">MFYSRYFIPTIKETPSDAEVVSHQLMLRAGMIRKLAAGIYNYLPLGLRSIRKFEAIVREEMNRAGAIEMLMPSVQPAELWEESGRWSFYGKELLRFRDRKDGEFCMGPTHEEVITDMVRREIKSYRQMPVNFYQIQTKFRDEIRPRFGLMRGREFIMKDAYSFDVDSAAADGSYELMFQAYMRIFERCGLNFRAVEADTGTIGGSSSHEFMVLADSGEDAIVSCDSCRYAANVEKAESRPAAGASTEEQLELTKTATPDMKSIADVAAFLGLATDRTIKALVYSSTTGEHVMAILRGDHELNEIKLKNCLGWDEIQMATDEEILAYTGSPVGFLGPMGLKQGVVVVADLALRGMANAVIGANEKDMHYINANLGRDFTSDRFVDLRNVEAGDPCPRCEGGKLEMWRGIEVGHVFKLGTKYSQALGATYLDADGKEQVIFMGCYGIGIGRTVAAAIEQNHDDNGIIFPLPLAPFHCSVVALNTKDKGVMAAAEEMYFRLEQQGIEVLFDDRDERPGVKFKDNDLIGIPLRIVVGSKGLSEGKVEVKIRASGEMLLLSPDEAVETIVRMVRDAVTSAQ</sequence>
<reference key="1">
    <citation type="submission" date="2006-10" db="EMBL/GenBank/DDBJ databases">
        <title>Complete sequence of chromosome of Pelobacter propionicus DSM 2379.</title>
        <authorList>
            <consortium name="US DOE Joint Genome Institute"/>
            <person name="Copeland A."/>
            <person name="Lucas S."/>
            <person name="Lapidus A."/>
            <person name="Barry K."/>
            <person name="Detter J.C."/>
            <person name="Glavina del Rio T."/>
            <person name="Hammon N."/>
            <person name="Israni S."/>
            <person name="Dalin E."/>
            <person name="Tice H."/>
            <person name="Pitluck S."/>
            <person name="Saunders E."/>
            <person name="Brettin T."/>
            <person name="Bruce D."/>
            <person name="Han C."/>
            <person name="Tapia R."/>
            <person name="Schmutz J."/>
            <person name="Larimer F."/>
            <person name="Land M."/>
            <person name="Hauser L."/>
            <person name="Kyrpides N."/>
            <person name="Kim E."/>
            <person name="Lovley D."/>
            <person name="Richardson P."/>
        </authorList>
    </citation>
    <scope>NUCLEOTIDE SEQUENCE [LARGE SCALE GENOMIC DNA]</scope>
    <source>
        <strain>DSM 2379 / NBRC 103807 / OttBd1</strain>
    </source>
</reference>
<name>SYP_PELPD</name>
<feature type="chain" id="PRO_1000069151" description="Proline--tRNA ligase">
    <location>
        <begin position="1"/>
        <end position="576"/>
    </location>
</feature>
<accession>A1APU5</accession>
<proteinExistence type="inferred from homology"/>